<organism>
    <name type="scientific">Cupriavidus taiwanensis (strain DSM 17343 / BCRC 17206 / CCUG 44338 / CIP 107171 / LMG 19424 / R1)</name>
    <name type="common">Ralstonia taiwanensis (strain LMG 19424)</name>
    <dbReference type="NCBI Taxonomy" id="977880"/>
    <lineage>
        <taxon>Bacteria</taxon>
        <taxon>Pseudomonadati</taxon>
        <taxon>Pseudomonadota</taxon>
        <taxon>Betaproteobacteria</taxon>
        <taxon>Burkholderiales</taxon>
        <taxon>Burkholderiaceae</taxon>
        <taxon>Cupriavidus</taxon>
    </lineage>
</organism>
<comment type="function">
    <text evidence="1">Functions in the N-end rule pathway of protein degradation where it conjugates Leu from its aminoacyl-tRNA to the N-termini of proteins containing an N-terminal aspartate or glutamate.</text>
</comment>
<comment type="catalytic activity">
    <reaction evidence="1">
        <text>N-terminal L-glutamyl-[protein] + L-leucyl-tRNA(Leu) = N-terminal L-leucyl-L-glutamyl-[protein] + tRNA(Leu) + H(+)</text>
        <dbReference type="Rhea" id="RHEA:50412"/>
        <dbReference type="Rhea" id="RHEA-COMP:9613"/>
        <dbReference type="Rhea" id="RHEA-COMP:9622"/>
        <dbReference type="Rhea" id="RHEA-COMP:12664"/>
        <dbReference type="Rhea" id="RHEA-COMP:12668"/>
        <dbReference type="ChEBI" id="CHEBI:15378"/>
        <dbReference type="ChEBI" id="CHEBI:64721"/>
        <dbReference type="ChEBI" id="CHEBI:78442"/>
        <dbReference type="ChEBI" id="CHEBI:78494"/>
        <dbReference type="ChEBI" id="CHEBI:133041"/>
        <dbReference type="EC" id="2.3.2.29"/>
    </reaction>
</comment>
<comment type="catalytic activity">
    <reaction evidence="1">
        <text>N-terminal L-aspartyl-[protein] + L-leucyl-tRNA(Leu) = N-terminal L-leucyl-L-aspartyl-[protein] + tRNA(Leu) + H(+)</text>
        <dbReference type="Rhea" id="RHEA:50420"/>
        <dbReference type="Rhea" id="RHEA-COMP:9613"/>
        <dbReference type="Rhea" id="RHEA-COMP:9622"/>
        <dbReference type="Rhea" id="RHEA-COMP:12669"/>
        <dbReference type="Rhea" id="RHEA-COMP:12674"/>
        <dbReference type="ChEBI" id="CHEBI:15378"/>
        <dbReference type="ChEBI" id="CHEBI:64720"/>
        <dbReference type="ChEBI" id="CHEBI:78442"/>
        <dbReference type="ChEBI" id="CHEBI:78494"/>
        <dbReference type="ChEBI" id="CHEBI:133042"/>
        <dbReference type="EC" id="2.3.2.29"/>
    </reaction>
</comment>
<comment type="subcellular location">
    <subcellularLocation>
        <location evidence="1">Cytoplasm</location>
    </subcellularLocation>
</comment>
<comment type="similarity">
    <text evidence="1">Belongs to the R-transferase family. Bpt subfamily.</text>
</comment>
<keyword id="KW-0012">Acyltransferase</keyword>
<keyword id="KW-0963">Cytoplasm</keyword>
<keyword id="KW-0808">Transferase</keyword>
<proteinExistence type="inferred from homology"/>
<sequence>MSKLKELPLSALQFYATAPYACSYLDGRMARSQVATPAHLINADVYSRLVRAGFRRSGIFTYRPYCDDCHACTPCRVLVDQFTPDRSQRRAWNRHQHLQALVAPLTYVEEHYSLYLLYQSMRHAGGGMDQDSRDQYEQFLLQSRVNSRLVEFRDPPGSPEAGRLRMVSMIDVLDDGLSSVYTFYDPLERNASYGTYNILWQIRQTHALGLPHLYLGYWIADSRKMAYKARFRPLQVLTGNHWHAFEDLGTEAAEAAAPVPPAPQA</sequence>
<protein>
    <recommendedName>
        <fullName evidence="1">Aspartate/glutamate leucyltransferase</fullName>
        <ecNumber evidence="1">2.3.2.29</ecNumber>
    </recommendedName>
</protein>
<gene>
    <name evidence="1" type="primary">bpt</name>
    <name type="ordered locus">RALTA_A1315</name>
</gene>
<name>BPT_CUPTR</name>
<evidence type="ECO:0000255" key="1">
    <source>
        <dbReference type="HAMAP-Rule" id="MF_00689"/>
    </source>
</evidence>
<accession>B3R4T1</accession>
<reference key="1">
    <citation type="journal article" date="2008" name="Genome Res.">
        <title>Genome sequence of the beta-rhizobium Cupriavidus taiwanensis and comparative genomics of rhizobia.</title>
        <authorList>
            <person name="Amadou C."/>
            <person name="Pascal G."/>
            <person name="Mangenot S."/>
            <person name="Glew M."/>
            <person name="Bontemps C."/>
            <person name="Capela D."/>
            <person name="Carrere S."/>
            <person name="Cruveiller S."/>
            <person name="Dossat C."/>
            <person name="Lajus A."/>
            <person name="Marchetti M."/>
            <person name="Poinsot V."/>
            <person name="Rouy Z."/>
            <person name="Servin B."/>
            <person name="Saad M."/>
            <person name="Schenowitz C."/>
            <person name="Barbe V."/>
            <person name="Batut J."/>
            <person name="Medigue C."/>
            <person name="Masson-Boivin C."/>
        </authorList>
    </citation>
    <scope>NUCLEOTIDE SEQUENCE [LARGE SCALE GENOMIC DNA]</scope>
    <source>
        <strain>DSM 17343 / BCRC 17206 / CCUG 44338 / CIP 107171 / LMG 19424 / R1</strain>
    </source>
</reference>
<dbReference type="EC" id="2.3.2.29" evidence="1"/>
<dbReference type="EMBL" id="CU633749">
    <property type="protein sequence ID" value="CAQ69274.1"/>
    <property type="molecule type" value="Genomic_DNA"/>
</dbReference>
<dbReference type="RefSeq" id="WP_012352600.1">
    <property type="nucleotide sequence ID" value="NC_010528.1"/>
</dbReference>
<dbReference type="SMR" id="B3R4T1"/>
<dbReference type="GeneID" id="29761921"/>
<dbReference type="KEGG" id="cti:RALTA_A1315"/>
<dbReference type="eggNOG" id="COG2935">
    <property type="taxonomic scope" value="Bacteria"/>
</dbReference>
<dbReference type="HOGENOM" id="CLU_077607_0_0_4"/>
<dbReference type="BioCyc" id="CTAI977880:RALTA_RS06300-MONOMER"/>
<dbReference type="Proteomes" id="UP000001692">
    <property type="component" value="Chromosome 1"/>
</dbReference>
<dbReference type="GO" id="GO:0005737">
    <property type="term" value="C:cytoplasm"/>
    <property type="evidence" value="ECO:0007669"/>
    <property type="project" value="UniProtKB-SubCell"/>
</dbReference>
<dbReference type="GO" id="GO:0004057">
    <property type="term" value="F:arginyl-tRNA--protein transferase activity"/>
    <property type="evidence" value="ECO:0007669"/>
    <property type="project" value="InterPro"/>
</dbReference>
<dbReference type="GO" id="GO:0008914">
    <property type="term" value="F:leucyl-tRNA--protein transferase activity"/>
    <property type="evidence" value="ECO:0007669"/>
    <property type="project" value="UniProtKB-UniRule"/>
</dbReference>
<dbReference type="GO" id="GO:0071596">
    <property type="term" value="P:ubiquitin-dependent protein catabolic process via the N-end rule pathway"/>
    <property type="evidence" value="ECO:0007669"/>
    <property type="project" value="InterPro"/>
</dbReference>
<dbReference type="HAMAP" id="MF_00689">
    <property type="entry name" value="Bpt"/>
    <property type="match status" value="1"/>
</dbReference>
<dbReference type="InterPro" id="IPR016181">
    <property type="entry name" value="Acyl_CoA_acyltransferase"/>
</dbReference>
<dbReference type="InterPro" id="IPR017138">
    <property type="entry name" value="Asp_Glu_LeuTrfase"/>
</dbReference>
<dbReference type="InterPro" id="IPR030700">
    <property type="entry name" value="N-end_Aminoacyl_Trfase"/>
</dbReference>
<dbReference type="InterPro" id="IPR007472">
    <property type="entry name" value="N-end_Aminoacyl_Trfase_C"/>
</dbReference>
<dbReference type="InterPro" id="IPR007471">
    <property type="entry name" value="N-end_Aminoacyl_Trfase_N"/>
</dbReference>
<dbReference type="NCBIfam" id="NF002341">
    <property type="entry name" value="PRK01305.1-1"/>
    <property type="match status" value="1"/>
</dbReference>
<dbReference type="NCBIfam" id="NF002342">
    <property type="entry name" value="PRK01305.1-3"/>
    <property type="match status" value="1"/>
</dbReference>
<dbReference type="NCBIfam" id="NF002346">
    <property type="entry name" value="PRK01305.2-3"/>
    <property type="match status" value="1"/>
</dbReference>
<dbReference type="PANTHER" id="PTHR21367">
    <property type="entry name" value="ARGININE-TRNA-PROTEIN TRANSFERASE 1"/>
    <property type="match status" value="1"/>
</dbReference>
<dbReference type="PANTHER" id="PTHR21367:SF1">
    <property type="entry name" value="ARGINYL-TRNA--PROTEIN TRANSFERASE 1"/>
    <property type="match status" value="1"/>
</dbReference>
<dbReference type="Pfam" id="PF04377">
    <property type="entry name" value="ATE_C"/>
    <property type="match status" value="1"/>
</dbReference>
<dbReference type="Pfam" id="PF04376">
    <property type="entry name" value="ATE_N"/>
    <property type="match status" value="1"/>
</dbReference>
<dbReference type="PIRSF" id="PIRSF037208">
    <property type="entry name" value="ATE_pro_prd"/>
    <property type="match status" value="1"/>
</dbReference>
<dbReference type="SUPFAM" id="SSF55729">
    <property type="entry name" value="Acyl-CoA N-acyltransferases (Nat)"/>
    <property type="match status" value="1"/>
</dbReference>
<feature type="chain" id="PRO_1000131979" description="Aspartate/glutamate leucyltransferase">
    <location>
        <begin position="1"/>
        <end position="265"/>
    </location>
</feature>